<name>APCF_CYACA</name>
<organism>
    <name type="scientific">Cyanidium caldarium</name>
    <name type="common">Red alga</name>
    <dbReference type="NCBI Taxonomy" id="2771"/>
    <lineage>
        <taxon>Eukaryota</taxon>
        <taxon>Rhodophyta</taxon>
        <taxon>Bangiophyceae</taxon>
        <taxon>Cyanidiales</taxon>
        <taxon>Cyanidiaceae</taxon>
        <taxon>Cyanidium</taxon>
    </lineage>
</organism>
<feature type="chain" id="PRO_0000199090" description="Allophycocyanin subunit beta-18">
    <location>
        <begin position="1"/>
        <end position="170"/>
    </location>
</feature>
<feature type="binding site" description="covalent" evidence="1">
    <location>
        <position position="84"/>
    </location>
    <ligand>
        <name>(2R,3E)-phycocyanobilin</name>
        <dbReference type="ChEBI" id="CHEBI:85275"/>
    </ligand>
</feature>
<feature type="modified residue" description="N4-methylasparagine" evidence="1">
    <location>
        <position position="74"/>
    </location>
</feature>
<dbReference type="EMBL" id="AF022186">
    <property type="protein sequence ID" value="AAB82693.1"/>
    <property type="molecule type" value="Genomic_DNA"/>
</dbReference>
<dbReference type="PIR" id="T11964">
    <property type="entry name" value="T11964"/>
</dbReference>
<dbReference type="RefSeq" id="NP_045068.1">
    <property type="nucleotide sequence ID" value="NC_001840.1"/>
</dbReference>
<dbReference type="SMR" id="O19896"/>
<dbReference type="GeneID" id="800191"/>
<dbReference type="GO" id="GO:0009535">
    <property type="term" value="C:chloroplast thylakoid membrane"/>
    <property type="evidence" value="ECO:0007669"/>
    <property type="project" value="UniProtKB-SubCell"/>
</dbReference>
<dbReference type="GO" id="GO:0030089">
    <property type="term" value="C:phycobilisome"/>
    <property type="evidence" value="ECO:0007669"/>
    <property type="project" value="UniProtKB-KW"/>
</dbReference>
<dbReference type="GO" id="GO:0015979">
    <property type="term" value="P:photosynthesis"/>
    <property type="evidence" value="ECO:0007669"/>
    <property type="project" value="UniProtKB-KW"/>
</dbReference>
<dbReference type="Gene3D" id="1.10.490.20">
    <property type="entry name" value="Phycocyanins"/>
    <property type="match status" value="1"/>
</dbReference>
<dbReference type="InterPro" id="IPR006245">
    <property type="entry name" value="Allophycocyanin_b"/>
</dbReference>
<dbReference type="InterPro" id="IPR009050">
    <property type="entry name" value="Globin-like_sf"/>
</dbReference>
<dbReference type="InterPro" id="IPR012128">
    <property type="entry name" value="Phycobilisome_asu/bsu"/>
</dbReference>
<dbReference type="InterPro" id="IPR038719">
    <property type="entry name" value="Phycobilisome_asu/bsu_sf"/>
</dbReference>
<dbReference type="NCBIfam" id="TIGR01337">
    <property type="entry name" value="apcB"/>
    <property type="match status" value="1"/>
</dbReference>
<dbReference type="PANTHER" id="PTHR34011:SF3">
    <property type="entry name" value="ALLOPHYCOCYANIN BETA CHAIN"/>
    <property type="match status" value="1"/>
</dbReference>
<dbReference type="PANTHER" id="PTHR34011">
    <property type="entry name" value="PHYCOBILISOME 32.1 KDA LINKER POLYPEPTIDE, PHYCOCYANIN-ASSOCIATED, ROD 2-RELATED"/>
    <property type="match status" value="1"/>
</dbReference>
<dbReference type="Pfam" id="PF00502">
    <property type="entry name" value="Phycobilisome"/>
    <property type="match status" value="1"/>
</dbReference>
<dbReference type="PIRSF" id="PIRSF000081">
    <property type="entry name" value="Phycocyanin"/>
    <property type="match status" value="1"/>
</dbReference>
<dbReference type="SUPFAM" id="SSF46458">
    <property type="entry name" value="Globin-like"/>
    <property type="match status" value="1"/>
</dbReference>
<sequence>MQLQDSIVNIISTYDNAGKYLDSNAITNIKKYFDTADTRLGIVKIINANSSLIIQQASSQLFERNPELIRPSGNAYTTRRYAACLRDIDYYLRYASYSIVANDTSVLSSRVLAGLKDTYNSLGVPLASIVTLLELLKELIKEKTKNINDAHKYIDEPFLYMMKILCENDV</sequence>
<gene>
    <name type="primary">apcF</name>
</gene>
<evidence type="ECO:0000250" key="1"/>
<evidence type="ECO:0000305" key="2"/>
<protein>
    <recommendedName>
        <fullName>Allophycocyanin subunit beta-18</fullName>
        <shortName>Allophycocyanin subunit B18</shortName>
    </recommendedName>
</protein>
<geneLocation type="chloroplast"/>
<accession>O19896</accession>
<keyword id="KW-0042">Antenna complex</keyword>
<keyword id="KW-0089">Bile pigment</keyword>
<keyword id="KW-0150">Chloroplast</keyword>
<keyword id="KW-0157">Chromophore</keyword>
<keyword id="KW-0249">Electron transport</keyword>
<keyword id="KW-0472">Membrane</keyword>
<keyword id="KW-0488">Methylation</keyword>
<keyword id="KW-0602">Photosynthesis</keyword>
<keyword id="KW-0605">Phycobilisome</keyword>
<keyword id="KW-0934">Plastid</keyword>
<keyword id="KW-0793">Thylakoid</keyword>
<keyword id="KW-0813">Transport</keyword>
<reference key="1">
    <citation type="journal article" date="2000" name="J. Mol. Evol.">
        <title>The structure and gene repertoire of an ancient red algal plastid genome.</title>
        <authorList>
            <person name="Gloeckner G."/>
            <person name="Rosenthal A."/>
            <person name="Valentin K.-U."/>
        </authorList>
    </citation>
    <scope>NUCLEOTIDE SEQUENCE [LARGE SCALE GENOMIC DNA]</scope>
    <source>
        <strain>RK-1</strain>
    </source>
</reference>
<comment type="function">
    <text>Light-harvesting photosynthetic bile pigment-protein from the phycobiliprotein complex. Allophycocyanin has a maximum absorption at approximately 650 nanometers.</text>
</comment>
<comment type="subunit">
    <text evidence="1">Heterodimer of an alpha and a beta chain.</text>
</comment>
<comment type="subcellular location">
    <subcellularLocation>
        <location evidence="1">Plastid</location>
        <location evidence="1">Chloroplast thylakoid membrane</location>
        <topology evidence="1">Peripheral membrane protein</topology>
        <orientation evidence="1">Stromal side</orientation>
    </subcellularLocation>
    <text evidence="1">Forms the core of the phycobilisome.</text>
</comment>
<comment type="PTM">
    <text evidence="1">Contains one covalently linked bilin chromophore.</text>
</comment>
<comment type="similarity">
    <text evidence="2">Belongs to the phycobiliprotein family.</text>
</comment>
<proteinExistence type="inferred from homology"/>